<protein>
    <recommendedName>
        <fullName>Cyclin-dependent kinase 1</fullName>
        <shortName>CDK1</shortName>
        <ecNumber evidence="1">2.7.11.22</ecNumber>
        <ecNumber evidence="2">2.7.11.23</ecNumber>
    </recommendedName>
    <alternativeName>
        <fullName>Cell division control protein 2 homolog</fullName>
    </alternativeName>
    <alternativeName>
        <fullName>Cell division protein kinase 1</fullName>
    </alternativeName>
    <alternativeName>
        <fullName>p34 protein kinase</fullName>
    </alternativeName>
</protein>
<feature type="chain" id="PRO_0000085733" description="Cyclin-dependent kinase 1">
    <location>
        <begin position="1"/>
        <end position="303"/>
    </location>
</feature>
<feature type="domain" description="Protein kinase" evidence="5">
    <location>
        <begin position="4"/>
        <end position="287"/>
    </location>
</feature>
<feature type="active site" description="Proton acceptor" evidence="5 6">
    <location>
        <position position="128"/>
    </location>
</feature>
<feature type="binding site" evidence="5">
    <location>
        <begin position="10"/>
        <end position="18"/>
    </location>
    <ligand>
        <name>ATP</name>
        <dbReference type="ChEBI" id="CHEBI:30616"/>
    </ligand>
</feature>
<feature type="binding site" evidence="5">
    <location>
        <position position="33"/>
    </location>
    <ligand>
        <name>ATP</name>
        <dbReference type="ChEBI" id="CHEBI:30616"/>
    </ligand>
</feature>
<feature type="modified residue" description="Phosphothreonine" evidence="1">
    <location>
        <position position="14"/>
    </location>
</feature>
<feature type="modified residue" description="Phosphotyrosine; by wee1 and wee2" evidence="1">
    <location>
        <position position="15"/>
    </location>
</feature>
<feature type="modified residue" description="Phosphothreonine; by cak" evidence="1">
    <location>
        <position position="161"/>
    </location>
</feature>
<comment type="function">
    <text evidence="1 3">Plays a key role in the control of the eukaryotic cell cycle by modulating the centrosome cycle as well as mitotic onset; promotes G2-M transition via association with multiple interphase cyclins (By similarity). During G2 and early mitosis, CDC25A/B/C-mediated dephosphorylation activates CDK1/cyclin complexes which phosphorylate several substrates that trigger at least centrosome separation, Golgi dynamics, nuclear envelope breakdown and chromosome condensation. Once chromosomes are condensed and aligned at the metaphase plate, CDK1 activity is switched off by WEE1- and PKMYT1-mediated phosphorylation to allow sister chromatid separation, chromosome decondensation, reformation of the nuclear envelope and cytokinesis (By similarity). Catalyzes lamin (LMNA, LMNB1 and LMNB2) phosphorylation at the onset of mitosis, promoting nuclear envelope breakdown (By similarity).</text>
</comment>
<comment type="catalytic activity">
    <reaction evidence="1">
        <text>L-seryl-[protein] + ATP = O-phospho-L-seryl-[protein] + ADP + H(+)</text>
        <dbReference type="Rhea" id="RHEA:17989"/>
        <dbReference type="Rhea" id="RHEA-COMP:9863"/>
        <dbReference type="Rhea" id="RHEA-COMP:11604"/>
        <dbReference type="ChEBI" id="CHEBI:15378"/>
        <dbReference type="ChEBI" id="CHEBI:29999"/>
        <dbReference type="ChEBI" id="CHEBI:30616"/>
        <dbReference type="ChEBI" id="CHEBI:83421"/>
        <dbReference type="ChEBI" id="CHEBI:456216"/>
        <dbReference type="EC" id="2.7.11.22"/>
    </reaction>
</comment>
<comment type="catalytic activity">
    <reaction evidence="1">
        <text>L-threonyl-[protein] + ATP = O-phospho-L-threonyl-[protein] + ADP + H(+)</text>
        <dbReference type="Rhea" id="RHEA:46608"/>
        <dbReference type="Rhea" id="RHEA-COMP:11060"/>
        <dbReference type="Rhea" id="RHEA-COMP:11605"/>
        <dbReference type="ChEBI" id="CHEBI:15378"/>
        <dbReference type="ChEBI" id="CHEBI:30013"/>
        <dbReference type="ChEBI" id="CHEBI:30616"/>
        <dbReference type="ChEBI" id="CHEBI:61977"/>
        <dbReference type="ChEBI" id="CHEBI:456216"/>
        <dbReference type="EC" id="2.7.11.22"/>
    </reaction>
</comment>
<comment type="catalytic activity">
    <reaction evidence="2">
        <text>[DNA-directed RNA polymerase] + ATP = phospho-[DNA-directed RNA polymerase] + ADP + H(+)</text>
        <dbReference type="Rhea" id="RHEA:10216"/>
        <dbReference type="Rhea" id="RHEA-COMP:11321"/>
        <dbReference type="Rhea" id="RHEA-COMP:11322"/>
        <dbReference type="ChEBI" id="CHEBI:15378"/>
        <dbReference type="ChEBI" id="CHEBI:30616"/>
        <dbReference type="ChEBI" id="CHEBI:43176"/>
        <dbReference type="ChEBI" id="CHEBI:68546"/>
        <dbReference type="ChEBI" id="CHEBI:456216"/>
        <dbReference type="EC" id="2.7.11.23"/>
    </reaction>
</comment>
<comment type="activity regulation">
    <text evidence="1">Phosphorylation at Thr-14 or Tyr-15 inactivates the enzyme, while phosphorylation at Thr-161 activates it.</text>
</comment>
<comment type="subunit">
    <text evidence="4">Forms a stable but non-covalent complex with cyclin B in mature oocytes.</text>
</comment>
<comment type="subcellular location">
    <subcellularLocation>
        <location evidence="1">Nucleus</location>
    </subcellularLocation>
    <subcellularLocation>
        <location evidence="1">Cytoplasm</location>
        <location evidence="1">Cytoskeleton</location>
        <location evidence="1">Microtubule organizing center</location>
        <location evidence="1">Centrosome</location>
    </subcellularLocation>
</comment>
<comment type="PTM">
    <text evidence="1">Phosphorylation at Tyr-15 by wee1 and wee2 inhibits the protein kinase activity and acts negative regulator of entry into mitosis (G2 to M transition).</text>
</comment>
<comment type="similarity">
    <text evidence="7">Belongs to the protein kinase superfamily. CMGC Ser/Thr protein kinase family. CDC2/CDKX subfamily.</text>
</comment>
<keyword id="KW-0067">ATP-binding</keyword>
<keyword id="KW-0131">Cell cycle</keyword>
<keyword id="KW-0132">Cell division</keyword>
<keyword id="KW-0963">Cytoplasm</keyword>
<keyword id="KW-0206">Cytoskeleton</keyword>
<keyword id="KW-0418">Kinase</keyword>
<keyword id="KW-0498">Mitosis</keyword>
<keyword id="KW-0547">Nucleotide-binding</keyword>
<keyword id="KW-0539">Nucleus</keyword>
<keyword id="KW-0597">Phosphoprotein</keyword>
<keyword id="KW-0723">Serine/threonine-protein kinase</keyword>
<keyword id="KW-0808">Transferase</keyword>
<dbReference type="EC" id="2.7.11.22" evidence="1"/>
<dbReference type="EC" id="2.7.11.23" evidence="2"/>
<dbReference type="EMBL" id="AB050465">
    <property type="protein sequence ID" value="BAB17223.1"/>
    <property type="molecule type" value="mRNA"/>
</dbReference>
<dbReference type="SMR" id="Q9DG98"/>
<dbReference type="GO" id="GO:0005813">
    <property type="term" value="C:centrosome"/>
    <property type="evidence" value="ECO:0007669"/>
    <property type="project" value="UniProtKB-SubCell"/>
</dbReference>
<dbReference type="GO" id="GO:0005737">
    <property type="term" value="C:cytoplasm"/>
    <property type="evidence" value="ECO:0007669"/>
    <property type="project" value="UniProtKB-KW"/>
</dbReference>
<dbReference type="GO" id="GO:0005634">
    <property type="term" value="C:nucleus"/>
    <property type="evidence" value="ECO:0007669"/>
    <property type="project" value="UniProtKB-SubCell"/>
</dbReference>
<dbReference type="GO" id="GO:0005524">
    <property type="term" value="F:ATP binding"/>
    <property type="evidence" value="ECO:0007669"/>
    <property type="project" value="UniProtKB-KW"/>
</dbReference>
<dbReference type="GO" id="GO:0004693">
    <property type="term" value="F:cyclin-dependent protein serine/threonine kinase activity"/>
    <property type="evidence" value="ECO:0000250"/>
    <property type="project" value="UniProtKB"/>
</dbReference>
<dbReference type="GO" id="GO:0106310">
    <property type="term" value="F:protein serine kinase activity"/>
    <property type="evidence" value="ECO:0007669"/>
    <property type="project" value="RHEA"/>
</dbReference>
<dbReference type="GO" id="GO:0008353">
    <property type="term" value="F:RNA polymerase II CTD heptapeptide repeat kinase activity"/>
    <property type="evidence" value="ECO:0007669"/>
    <property type="project" value="UniProtKB-EC"/>
</dbReference>
<dbReference type="GO" id="GO:0051301">
    <property type="term" value="P:cell division"/>
    <property type="evidence" value="ECO:0007669"/>
    <property type="project" value="UniProtKB-KW"/>
</dbReference>
<dbReference type="GO" id="GO:0000086">
    <property type="term" value="P:G2/M transition of mitotic cell cycle"/>
    <property type="evidence" value="ECO:0000250"/>
    <property type="project" value="UniProtKB"/>
</dbReference>
<dbReference type="GO" id="GO:0007095">
    <property type="term" value="P:mitotic G2 DNA damage checkpoint signaling"/>
    <property type="evidence" value="ECO:0007669"/>
    <property type="project" value="TreeGrafter"/>
</dbReference>
<dbReference type="CDD" id="cd07861">
    <property type="entry name" value="STKc_CDK1_euk"/>
    <property type="match status" value="1"/>
</dbReference>
<dbReference type="FunFam" id="1.10.510.10:FF:000231">
    <property type="entry name" value="Cyclin-dependent kinase 1"/>
    <property type="match status" value="1"/>
</dbReference>
<dbReference type="FunFam" id="3.30.200.20:FF:000027">
    <property type="entry name" value="Putative Cyclin-dependent kinase 1"/>
    <property type="match status" value="1"/>
</dbReference>
<dbReference type="Gene3D" id="3.30.200.20">
    <property type="entry name" value="Phosphorylase Kinase, domain 1"/>
    <property type="match status" value="1"/>
</dbReference>
<dbReference type="Gene3D" id="1.10.510.10">
    <property type="entry name" value="Transferase(Phosphotransferase) domain 1"/>
    <property type="match status" value="1"/>
</dbReference>
<dbReference type="InterPro" id="IPR050108">
    <property type="entry name" value="CDK"/>
</dbReference>
<dbReference type="InterPro" id="IPR011009">
    <property type="entry name" value="Kinase-like_dom_sf"/>
</dbReference>
<dbReference type="InterPro" id="IPR000719">
    <property type="entry name" value="Prot_kinase_dom"/>
</dbReference>
<dbReference type="InterPro" id="IPR017441">
    <property type="entry name" value="Protein_kinase_ATP_BS"/>
</dbReference>
<dbReference type="InterPro" id="IPR008271">
    <property type="entry name" value="Ser/Thr_kinase_AS"/>
</dbReference>
<dbReference type="PANTHER" id="PTHR24056">
    <property type="entry name" value="CELL DIVISION PROTEIN KINASE"/>
    <property type="match status" value="1"/>
</dbReference>
<dbReference type="PANTHER" id="PTHR24056:SF334">
    <property type="entry name" value="CYCLIN-DEPENDENT KINASE 1"/>
    <property type="match status" value="1"/>
</dbReference>
<dbReference type="Pfam" id="PF00069">
    <property type="entry name" value="Pkinase"/>
    <property type="match status" value="1"/>
</dbReference>
<dbReference type="SMART" id="SM00220">
    <property type="entry name" value="S_TKc"/>
    <property type="match status" value="1"/>
</dbReference>
<dbReference type="SUPFAM" id="SSF56112">
    <property type="entry name" value="Protein kinase-like (PK-like)"/>
    <property type="match status" value="1"/>
</dbReference>
<dbReference type="PROSITE" id="PS00107">
    <property type="entry name" value="PROTEIN_KINASE_ATP"/>
    <property type="match status" value="1"/>
</dbReference>
<dbReference type="PROSITE" id="PS50011">
    <property type="entry name" value="PROTEIN_KINASE_DOM"/>
    <property type="match status" value="1"/>
</dbReference>
<dbReference type="PROSITE" id="PS00108">
    <property type="entry name" value="PROTEIN_KINASE_ST"/>
    <property type="match status" value="1"/>
</dbReference>
<name>CDK1_ORYLU</name>
<sequence>MEDYVKIEKIGEGTYGVVYKGRHKSTGQVVAMKKIRLESEEEGVPSTAVREVSLLQELKHPNVVRLLDVLMQESRLYLIFEFLSMDLKKYLDSIPSGQYMDPMLVKSYLYQILEGIYFCHRRRVLHRDLKPQNLLIDNKGVIKLADFGLARAFGVPVRVYTHEVVTLWYRAPEVLLGSPRYSTPVDVWSTGTIFAELATKKPLFHGDSEIDQLFRIFRTLGTPNNDVWPDVESLPDYKNTFPKWKGGSLSSMVKNLDKNGLDLLAKMLIYNPPKRISAREAMTHPYFDDLDKSTLPAACINGV</sequence>
<proteinExistence type="evidence at transcript level"/>
<gene>
    <name type="primary">cdk1</name>
    <name type="synonym">cdc2</name>
</gene>
<accession>Q9DG98</accession>
<organism>
    <name type="scientific">Oryzias luzonensis</name>
    <name type="common">Luzon ricefish</name>
    <dbReference type="NCBI Taxonomy" id="104659"/>
    <lineage>
        <taxon>Eukaryota</taxon>
        <taxon>Metazoa</taxon>
        <taxon>Chordata</taxon>
        <taxon>Craniata</taxon>
        <taxon>Vertebrata</taxon>
        <taxon>Euteleostomi</taxon>
        <taxon>Actinopterygii</taxon>
        <taxon>Neopterygii</taxon>
        <taxon>Teleostei</taxon>
        <taxon>Neoteleostei</taxon>
        <taxon>Acanthomorphata</taxon>
        <taxon>Ovalentaria</taxon>
        <taxon>Atherinomorphae</taxon>
        <taxon>Beloniformes</taxon>
        <taxon>Adrianichthyidae</taxon>
        <taxon>Oryziinae</taxon>
        <taxon>Oryzias</taxon>
    </lineage>
</organism>
<evidence type="ECO:0000250" key="1">
    <source>
        <dbReference type="UniProtKB" id="P06493"/>
    </source>
</evidence>
<evidence type="ECO:0000250" key="2">
    <source>
        <dbReference type="UniProtKB" id="P11440"/>
    </source>
</evidence>
<evidence type="ECO:0000250" key="3">
    <source>
        <dbReference type="UniProtKB" id="P13863"/>
    </source>
</evidence>
<evidence type="ECO:0000250" key="4">
    <source>
        <dbReference type="UniProtKB" id="P51958"/>
    </source>
</evidence>
<evidence type="ECO:0000255" key="5">
    <source>
        <dbReference type="PROSITE-ProRule" id="PRU00159"/>
    </source>
</evidence>
<evidence type="ECO:0000255" key="6">
    <source>
        <dbReference type="PROSITE-ProRule" id="PRU10027"/>
    </source>
</evidence>
<evidence type="ECO:0000305" key="7"/>
<reference key="1">
    <citation type="submission" date="2000-10" db="EMBL/GenBank/DDBJ databases">
        <title>cDNA cloning of Cdc2 and cyclin B in medaka species.</title>
        <authorList>
            <person name="Yamashita M."/>
            <person name="Mita K."/>
        </authorList>
    </citation>
    <scope>NUCLEOTIDE SEQUENCE [MRNA]</scope>
    <source>
        <tissue>Ovary</tissue>
    </source>
</reference>